<comment type="function">
    <text evidence="1">Binds together with bS18 to 16S ribosomal RNA.</text>
</comment>
<comment type="similarity">
    <text evidence="1">Belongs to the bacterial ribosomal protein bS6 family.</text>
</comment>
<name>RS6_BORPE</name>
<gene>
    <name evidence="1" type="primary">rpsF</name>
    <name type="ordered locus">BP2796</name>
</gene>
<dbReference type="EMBL" id="BX640419">
    <property type="protein sequence ID" value="CAE43069.1"/>
    <property type="molecule type" value="Genomic_DNA"/>
</dbReference>
<dbReference type="RefSeq" id="NP_881396.1">
    <property type="nucleotide sequence ID" value="NC_002929.2"/>
</dbReference>
<dbReference type="RefSeq" id="WP_010926331.1">
    <property type="nucleotide sequence ID" value="NZ_CP039022.1"/>
</dbReference>
<dbReference type="SMR" id="Q7VV89"/>
<dbReference type="STRING" id="257313.BP2796"/>
<dbReference type="PaxDb" id="257313-BP2796"/>
<dbReference type="GeneID" id="93204250"/>
<dbReference type="KEGG" id="bpe:BP2796"/>
<dbReference type="PATRIC" id="fig|257313.5.peg.3016"/>
<dbReference type="eggNOG" id="COG0360">
    <property type="taxonomic scope" value="Bacteria"/>
</dbReference>
<dbReference type="HOGENOM" id="CLU_113441_6_1_4"/>
<dbReference type="Proteomes" id="UP000002676">
    <property type="component" value="Chromosome"/>
</dbReference>
<dbReference type="GO" id="GO:0022627">
    <property type="term" value="C:cytosolic small ribosomal subunit"/>
    <property type="evidence" value="ECO:0007669"/>
    <property type="project" value="TreeGrafter"/>
</dbReference>
<dbReference type="GO" id="GO:0070181">
    <property type="term" value="F:small ribosomal subunit rRNA binding"/>
    <property type="evidence" value="ECO:0007669"/>
    <property type="project" value="TreeGrafter"/>
</dbReference>
<dbReference type="GO" id="GO:0003735">
    <property type="term" value="F:structural constituent of ribosome"/>
    <property type="evidence" value="ECO:0007669"/>
    <property type="project" value="InterPro"/>
</dbReference>
<dbReference type="GO" id="GO:0006412">
    <property type="term" value="P:translation"/>
    <property type="evidence" value="ECO:0007669"/>
    <property type="project" value="UniProtKB-UniRule"/>
</dbReference>
<dbReference type="CDD" id="cd00473">
    <property type="entry name" value="bS6"/>
    <property type="match status" value="1"/>
</dbReference>
<dbReference type="Gene3D" id="3.30.70.60">
    <property type="match status" value="1"/>
</dbReference>
<dbReference type="HAMAP" id="MF_00360">
    <property type="entry name" value="Ribosomal_bS6"/>
    <property type="match status" value="1"/>
</dbReference>
<dbReference type="InterPro" id="IPR000529">
    <property type="entry name" value="Ribosomal_bS6"/>
</dbReference>
<dbReference type="InterPro" id="IPR035980">
    <property type="entry name" value="Ribosomal_bS6_sf"/>
</dbReference>
<dbReference type="InterPro" id="IPR020814">
    <property type="entry name" value="Ribosomal_S6_plastid/chlpt"/>
</dbReference>
<dbReference type="InterPro" id="IPR014717">
    <property type="entry name" value="Transl_elong_EF1B/ribsomal_bS6"/>
</dbReference>
<dbReference type="NCBIfam" id="TIGR00166">
    <property type="entry name" value="S6"/>
    <property type="match status" value="1"/>
</dbReference>
<dbReference type="PANTHER" id="PTHR21011">
    <property type="entry name" value="MITOCHONDRIAL 28S RIBOSOMAL PROTEIN S6"/>
    <property type="match status" value="1"/>
</dbReference>
<dbReference type="PANTHER" id="PTHR21011:SF1">
    <property type="entry name" value="SMALL RIBOSOMAL SUBUNIT PROTEIN BS6M"/>
    <property type="match status" value="1"/>
</dbReference>
<dbReference type="Pfam" id="PF01250">
    <property type="entry name" value="Ribosomal_S6"/>
    <property type="match status" value="1"/>
</dbReference>
<dbReference type="SUPFAM" id="SSF54995">
    <property type="entry name" value="Ribosomal protein S6"/>
    <property type="match status" value="1"/>
</dbReference>
<feature type="chain" id="PRO_0000176736" description="Small ribosomal subunit protein bS6">
    <location>
        <begin position="1"/>
        <end position="126"/>
    </location>
</feature>
<protein>
    <recommendedName>
        <fullName evidence="1">Small ribosomal subunit protein bS6</fullName>
    </recommendedName>
    <alternativeName>
        <fullName evidence="2">30S ribosomal protein S6</fullName>
    </alternativeName>
</protein>
<accession>Q7VV89</accession>
<proteinExistence type="inferred from homology"/>
<reference key="1">
    <citation type="journal article" date="2003" name="Nat. Genet.">
        <title>Comparative analysis of the genome sequences of Bordetella pertussis, Bordetella parapertussis and Bordetella bronchiseptica.</title>
        <authorList>
            <person name="Parkhill J."/>
            <person name="Sebaihia M."/>
            <person name="Preston A."/>
            <person name="Murphy L.D."/>
            <person name="Thomson N.R."/>
            <person name="Harris D.E."/>
            <person name="Holden M.T.G."/>
            <person name="Churcher C.M."/>
            <person name="Bentley S.D."/>
            <person name="Mungall K.L."/>
            <person name="Cerdeno-Tarraga A.-M."/>
            <person name="Temple L."/>
            <person name="James K.D."/>
            <person name="Harris B."/>
            <person name="Quail M.A."/>
            <person name="Achtman M."/>
            <person name="Atkin R."/>
            <person name="Baker S."/>
            <person name="Basham D."/>
            <person name="Bason N."/>
            <person name="Cherevach I."/>
            <person name="Chillingworth T."/>
            <person name="Collins M."/>
            <person name="Cronin A."/>
            <person name="Davis P."/>
            <person name="Doggett J."/>
            <person name="Feltwell T."/>
            <person name="Goble A."/>
            <person name="Hamlin N."/>
            <person name="Hauser H."/>
            <person name="Holroyd S."/>
            <person name="Jagels K."/>
            <person name="Leather S."/>
            <person name="Moule S."/>
            <person name="Norberczak H."/>
            <person name="O'Neil S."/>
            <person name="Ormond D."/>
            <person name="Price C."/>
            <person name="Rabbinowitsch E."/>
            <person name="Rutter S."/>
            <person name="Sanders M."/>
            <person name="Saunders D."/>
            <person name="Seeger K."/>
            <person name="Sharp S."/>
            <person name="Simmonds M."/>
            <person name="Skelton J."/>
            <person name="Squares R."/>
            <person name="Squares S."/>
            <person name="Stevens K."/>
            <person name="Unwin L."/>
            <person name="Whitehead S."/>
            <person name="Barrell B.G."/>
            <person name="Maskell D.J."/>
        </authorList>
    </citation>
    <scope>NUCLEOTIDE SEQUENCE [LARGE SCALE GENOMIC DNA]</scope>
    <source>
        <strain>Tohama I / ATCC BAA-589 / NCTC 13251</strain>
    </source>
</reference>
<organism>
    <name type="scientific">Bordetella pertussis (strain Tohama I / ATCC BAA-589 / NCTC 13251)</name>
    <dbReference type="NCBI Taxonomy" id="257313"/>
    <lineage>
        <taxon>Bacteria</taxon>
        <taxon>Pseudomonadati</taxon>
        <taxon>Pseudomonadota</taxon>
        <taxon>Betaproteobacteria</taxon>
        <taxon>Burkholderiales</taxon>
        <taxon>Alcaligenaceae</taxon>
        <taxon>Bordetella</taxon>
    </lineage>
</organism>
<evidence type="ECO:0000255" key="1">
    <source>
        <dbReference type="HAMAP-Rule" id="MF_00360"/>
    </source>
</evidence>
<evidence type="ECO:0000305" key="2"/>
<sequence>MRHYEVVFIVHPDQSEQVPAMVERYQALVTGQSGTVHRLEDWGRRQLAYPIQKLVKAHYVCMNIECGQATLDELEHSFRYNDAVLRHLVIKTKKAPAAPSIMMKSVEREEARKASAEAAATATAAE</sequence>
<keyword id="KW-1185">Reference proteome</keyword>
<keyword id="KW-0687">Ribonucleoprotein</keyword>
<keyword id="KW-0689">Ribosomal protein</keyword>
<keyword id="KW-0694">RNA-binding</keyword>
<keyword id="KW-0699">rRNA-binding</keyword>